<protein>
    <recommendedName>
        <fullName>UPF0324 membrane protein PBPRB0970</fullName>
    </recommendedName>
</protein>
<evidence type="ECO:0000255" key="1"/>
<evidence type="ECO:0000305" key="2"/>
<sequence length="326" mass="34709">MYSNKPSRKPHTFQFRGKQLQASDSLFFIIALLCLLPIISSPVALILGFTLASFGFVPTKLNIAAATKKLLAYSIIGLGFGIHLDQAIAASTQGFGLIVGSIFFTLIFGWFLTKALRLDQKTGHLIASGTAICGGSAIAAVAPAINARDDQTSLALATVFVLNSIALFIFPAIGHLLEMSQHAFGTWAAIAIHDTSSVVGAAGAYGDEALRTATTIKLARALWIVPIAFLSALLFKGDNKKIGIPYFILFYCLAIVFAHFVPSLESIYSHIFVASKRLLVVCLFLIGSGITIQKLRAAGLKPLLLGVLLWVAIGVGSLSYILLNVA</sequence>
<name>Y4970_PHOPR</name>
<organism>
    <name type="scientific">Photobacterium profundum (strain SS9)</name>
    <dbReference type="NCBI Taxonomy" id="298386"/>
    <lineage>
        <taxon>Bacteria</taxon>
        <taxon>Pseudomonadati</taxon>
        <taxon>Pseudomonadota</taxon>
        <taxon>Gammaproteobacteria</taxon>
        <taxon>Vibrionales</taxon>
        <taxon>Vibrionaceae</taxon>
        <taxon>Photobacterium</taxon>
    </lineage>
</organism>
<keyword id="KW-1003">Cell membrane</keyword>
<keyword id="KW-0472">Membrane</keyword>
<keyword id="KW-1185">Reference proteome</keyword>
<keyword id="KW-0812">Transmembrane</keyword>
<keyword id="KW-1133">Transmembrane helix</keyword>
<reference key="1">
    <citation type="journal article" date="2005" name="Science">
        <title>Life at depth: Photobacterium profundum genome sequence and expression analysis.</title>
        <authorList>
            <person name="Vezzi A."/>
            <person name="Campanaro S."/>
            <person name="D'Angelo M."/>
            <person name="Simonato F."/>
            <person name="Vitulo N."/>
            <person name="Lauro F.M."/>
            <person name="Cestaro A."/>
            <person name="Malacrida G."/>
            <person name="Simionati B."/>
            <person name="Cannata N."/>
            <person name="Romualdi C."/>
            <person name="Bartlett D.H."/>
            <person name="Valle G."/>
        </authorList>
    </citation>
    <scope>NUCLEOTIDE SEQUENCE [LARGE SCALE GENOMIC DNA]</scope>
    <source>
        <strain>ATCC BAA-1253 / SS9</strain>
    </source>
</reference>
<dbReference type="EMBL" id="CR378678">
    <property type="protein sequence ID" value="CAG22842.1"/>
    <property type="molecule type" value="Genomic_DNA"/>
</dbReference>
<dbReference type="RefSeq" id="WP_011221037.1">
    <property type="nucleotide sequence ID" value="NC_006371.1"/>
</dbReference>
<dbReference type="STRING" id="298386.PBPRB0970"/>
<dbReference type="KEGG" id="ppr:PBPRB0970"/>
<dbReference type="eggNOG" id="COG2855">
    <property type="taxonomic scope" value="Bacteria"/>
</dbReference>
<dbReference type="HOGENOM" id="CLU_033541_2_0_6"/>
<dbReference type="Proteomes" id="UP000000593">
    <property type="component" value="Chromosome 2"/>
</dbReference>
<dbReference type="GO" id="GO:0005886">
    <property type="term" value="C:plasma membrane"/>
    <property type="evidence" value="ECO:0007669"/>
    <property type="project" value="UniProtKB-SubCell"/>
</dbReference>
<dbReference type="InterPro" id="IPR018383">
    <property type="entry name" value="UPF0324_pro"/>
</dbReference>
<dbReference type="PANTHER" id="PTHR30106">
    <property type="entry name" value="INNER MEMBRANE PROTEIN YEIH-RELATED"/>
    <property type="match status" value="1"/>
</dbReference>
<dbReference type="PANTHER" id="PTHR30106:SF1">
    <property type="entry name" value="UPF0324 MEMBRANE PROTEIN FN0533"/>
    <property type="match status" value="1"/>
</dbReference>
<dbReference type="Pfam" id="PF03601">
    <property type="entry name" value="Cons_hypoth698"/>
    <property type="match status" value="1"/>
</dbReference>
<comment type="subcellular location">
    <subcellularLocation>
        <location evidence="2">Cell membrane</location>
        <topology evidence="2">Multi-pass membrane protein</topology>
    </subcellularLocation>
</comment>
<comment type="similarity">
    <text evidence="2">Belongs to the UPF0324 family.</text>
</comment>
<gene>
    <name type="ordered locus">PBPRB0970</name>
</gene>
<accession>Q6LIN8</accession>
<feature type="chain" id="PRO_0000157437" description="UPF0324 membrane protein PBPRB0970">
    <location>
        <begin position="1"/>
        <end position="326"/>
    </location>
</feature>
<feature type="transmembrane region" description="Helical" evidence="1">
    <location>
        <begin position="27"/>
        <end position="49"/>
    </location>
</feature>
<feature type="transmembrane region" description="Helical" evidence="1">
    <location>
        <begin position="70"/>
        <end position="89"/>
    </location>
</feature>
<feature type="transmembrane region" description="Helical" evidence="1">
    <location>
        <begin position="94"/>
        <end position="116"/>
    </location>
</feature>
<feature type="transmembrane region" description="Helical" evidence="1">
    <location>
        <begin position="123"/>
        <end position="145"/>
    </location>
</feature>
<feature type="transmembrane region" description="Helical" evidence="1">
    <location>
        <begin position="155"/>
        <end position="177"/>
    </location>
</feature>
<feature type="transmembrane region" description="Helical" evidence="1">
    <location>
        <begin position="184"/>
        <end position="206"/>
    </location>
</feature>
<feature type="transmembrane region" description="Helical" evidence="1">
    <location>
        <begin position="216"/>
        <end position="235"/>
    </location>
</feature>
<feature type="transmembrane region" description="Helical" evidence="1">
    <location>
        <begin position="242"/>
        <end position="261"/>
    </location>
</feature>
<feature type="transmembrane region" description="Helical" evidence="1">
    <location>
        <begin position="271"/>
        <end position="290"/>
    </location>
</feature>
<feature type="transmembrane region" description="Helical" evidence="1">
    <location>
        <begin position="303"/>
        <end position="325"/>
    </location>
</feature>
<proteinExistence type="inferred from homology"/>